<comment type="function">
    <text evidence="1">A GTPase-activating protein (GAP) that modifies Der/EngA GTPase function. May play a role in ribosome biogenesis.</text>
</comment>
<comment type="subunit">
    <text evidence="1">Interacts with Der.</text>
</comment>
<comment type="similarity">
    <text evidence="1">Belongs to the YihI family.</text>
</comment>
<reference key="1">
    <citation type="journal article" date="2008" name="J. Bacteriol.">
        <title>The complete genome sequence of Escherichia coli DH10B: insights into the biology of a laboratory workhorse.</title>
        <authorList>
            <person name="Durfee T."/>
            <person name="Nelson R."/>
            <person name="Baldwin S."/>
            <person name="Plunkett G. III"/>
            <person name="Burland V."/>
            <person name="Mau B."/>
            <person name="Petrosino J.F."/>
            <person name="Qin X."/>
            <person name="Muzny D.M."/>
            <person name="Ayele M."/>
            <person name="Gibbs R.A."/>
            <person name="Csorgo B."/>
            <person name="Posfai G."/>
            <person name="Weinstock G.M."/>
            <person name="Blattner F.R."/>
        </authorList>
    </citation>
    <scope>NUCLEOTIDE SEQUENCE [LARGE SCALE GENOMIC DNA]</scope>
    <source>
        <strain>K12 / DH10B</strain>
    </source>
</reference>
<name>YIHI_ECODH</name>
<evidence type="ECO:0000255" key="1">
    <source>
        <dbReference type="HAMAP-Rule" id="MF_01058"/>
    </source>
</evidence>
<evidence type="ECO:0000256" key="2">
    <source>
        <dbReference type="SAM" id="MobiDB-lite"/>
    </source>
</evidence>
<keyword id="KW-0343">GTPase activation</keyword>
<keyword id="KW-0690">Ribosome biogenesis</keyword>
<protein>
    <recommendedName>
        <fullName evidence="1">Der GTPase-activating protein YihI</fullName>
    </recommendedName>
</protein>
<dbReference type="EMBL" id="CP000948">
    <property type="protein sequence ID" value="ACB04880.1"/>
    <property type="molecule type" value="Genomic_DNA"/>
</dbReference>
<dbReference type="RefSeq" id="WP_001295266.1">
    <property type="nucleotide sequence ID" value="NC_010473.1"/>
</dbReference>
<dbReference type="SMR" id="B1XAM2"/>
<dbReference type="GeneID" id="75204333"/>
<dbReference type="KEGG" id="ecd:ECDH10B_4056"/>
<dbReference type="HOGENOM" id="CLU_094104_2_0_6"/>
<dbReference type="GO" id="GO:0005096">
    <property type="term" value="F:GTPase activator activity"/>
    <property type="evidence" value="ECO:0007669"/>
    <property type="project" value="UniProtKB-KW"/>
</dbReference>
<dbReference type="GO" id="GO:0042254">
    <property type="term" value="P:ribosome biogenesis"/>
    <property type="evidence" value="ECO:0007669"/>
    <property type="project" value="UniProtKB-KW"/>
</dbReference>
<dbReference type="HAMAP" id="MF_01058">
    <property type="entry name" value="GAP_YihI"/>
    <property type="match status" value="1"/>
</dbReference>
<dbReference type="InterPro" id="IPR007336">
    <property type="entry name" value="YihI"/>
</dbReference>
<dbReference type="NCBIfam" id="NF003560">
    <property type="entry name" value="PRK05244.1-1"/>
    <property type="match status" value="1"/>
</dbReference>
<dbReference type="Pfam" id="PF04220">
    <property type="entry name" value="YihI"/>
    <property type="match status" value="1"/>
</dbReference>
<sequence length="169" mass="19059">MKPSSSNSRSKGHAKARRKTREELDQEARDRKRQKKRRGHAPGSRAAGGNTTSGSKGQNAPKDPRIGSKTPIPLGVTEKVTKQHKPKSEKPMLSPQAELELLETDERLDALLERLEAGETLSAEEQSWVDAKLDRIDELMQKLGLSYDDDEEEEEDEKQEDMMRLLRGN</sequence>
<proteinExistence type="inferred from homology"/>
<gene>
    <name evidence="1" type="primary">yihI</name>
    <name type="ordered locus">ECDH10B_4056</name>
</gene>
<accession>B1XAM2</accession>
<feature type="chain" id="PRO_1000136382" description="Der GTPase-activating protein YihI">
    <location>
        <begin position="1"/>
        <end position="169"/>
    </location>
</feature>
<feature type="region of interest" description="Disordered" evidence="2">
    <location>
        <begin position="1"/>
        <end position="98"/>
    </location>
</feature>
<feature type="region of interest" description="Disordered" evidence="2">
    <location>
        <begin position="144"/>
        <end position="169"/>
    </location>
</feature>
<feature type="compositionally biased region" description="Basic residues" evidence="2">
    <location>
        <begin position="10"/>
        <end position="19"/>
    </location>
</feature>
<feature type="compositionally biased region" description="Basic and acidic residues" evidence="2">
    <location>
        <begin position="20"/>
        <end position="30"/>
    </location>
</feature>
<feature type="compositionally biased region" description="Basic residues" evidence="2">
    <location>
        <begin position="31"/>
        <end position="40"/>
    </location>
</feature>
<feature type="compositionally biased region" description="Polar residues" evidence="2">
    <location>
        <begin position="49"/>
        <end position="58"/>
    </location>
</feature>
<feature type="compositionally biased region" description="Acidic residues" evidence="2">
    <location>
        <begin position="147"/>
        <end position="159"/>
    </location>
</feature>
<feature type="compositionally biased region" description="Basic and acidic residues" evidence="2">
    <location>
        <begin position="160"/>
        <end position="169"/>
    </location>
</feature>
<organism>
    <name type="scientific">Escherichia coli (strain K12 / DH10B)</name>
    <dbReference type="NCBI Taxonomy" id="316385"/>
    <lineage>
        <taxon>Bacteria</taxon>
        <taxon>Pseudomonadati</taxon>
        <taxon>Pseudomonadota</taxon>
        <taxon>Gammaproteobacteria</taxon>
        <taxon>Enterobacterales</taxon>
        <taxon>Enterobacteriaceae</taxon>
        <taxon>Escherichia</taxon>
    </lineage>
</organism>